<feature type="chain" id="PRO_1000086983" description="Large ribosomal subunit protein bL21">
    <location>
        <begin position="1"/>
        <end position="104"/>
    </location>
</feature>
<sequence>MFAVIRTGGKQYRVSPDTVLKVEKLDAEAGATVTFTDVLAVGGESGTTIGAPLVAGATVTATVIAQDRLDTVIIFKKRRRQNSRRKNGHRQPVTVLRIAAINAA</sequence>
<accession>A9H0E5</accession>
<accession>B5ZKE5</accession>
<dbReference type="EMBL" id="AM889285">
    <property type="protein sequence ID" value="CAP57114.1"/>
    <property type="molecule type" value="Genomic_DNA"/>
</dbReference>
<dbReference type="EMBL" id="CP001189">
    <property type="protein sequence ID" value="ACI52919.1"/>
    <property type="molecule type" value="Genomic_DNA"/>
</dbReference>
<dbReference type="RefSeq" id="WP_012227565.1">
    <property type="nucleotide sequence ID" value="NC_010125.1"/>
</dbReference>
<dbReference type="SMR" id="A9H0E5"/>
<dbReference type="STRING" id="272568.GDI3171"/>
<dbReference type="KEGG" id="gdi:GDI3171"/>
<dbReference type="KEGG" id="gdj:Gdia_3189"/>
<dbReference type="eggNOG" id="COG0261">
    <property type="taxonomic scope" value="Bacteria"/>
</dbReference>
<dbReference type="HOGENOM" id="CLU_061463_3_2_5"/>
<dbReference type="OrthoDB" id="9813334at2"/>
<dbReference type="Proteomes" id="UP000001176">
    <property type="component" value="Chromosome"/>
</dbReference>
<dbReference type="GO" id="GO:0005737">
    <property type="term" value="C:cytoplasm"/>
    <property type="evidence" value="ECO:0007669"/>
    <property type="project" value="UniProtKB-ARBA"/>
</dbReference>
<dbReference type="GO" id="GO:1990904">
    <property type="term" value="C:ribonucleoprotein complex"/>
    <property type="evidence" value="ECO:0007669"/>
    <property type="project" value="UniProtKB-KW"/>
</dbReference>
<dbReference type="GO" id="GO:0005840">
    <property type="term" value="C:ribosome"/>
    <property type="evidence" value="ECO:0007669"/>
    <property type="project" value="UniProtKB-KW"/>
</dbReference>
<dbReference type="GO" id="GO:0019843">
    <property type="term" value="F:rRNA binding"/>
    <property type="evidence" value="ECO:0007669"/>
    <property type="project" value="UniProtKB-UniRule"/>
</dbReference>
<dbReference type="GO" id="GO:0003735">
    <property type="term" value="F:structural constituent of ribosome"/>
    <property type="evidence" value="ECO:0007669"/>
    <property type="project" value="InterPro"/>
</dbReference>
<dbReference type="GO" id="GO:0006412">
    <property type="term" value="P:translation"/>
    <property type="evidence" value="ECO:0007669"/>
    <property type="project" value="UniProtKB-UniRule"/>
</dbReference>
<dbReference type="HAMAP" id="MF_01363">
    <property type="entry name" value="Ribosomal_bL21"/>
    <property type="match status" value="1"/>
</dbReference>
<dbReference type="InterPro" id="IPR028909">
    <property type="entry name" value="bL21-like"/>
</dbReference>
<dbReference type="InterPro" id="IPR036164">
    <property type="entry name" value="bL21-like_sf"/>
</dbReference>
<dbReference type="InterPro" id="IPR001787">
    <property type="entry name" value="Ribosomal_bL21"/>
</dbReference>
<dbReference type="NCBIfam" id="TIGR00061">
    <property type="entry name" value="L21"/>
    <property type="match status" value="1"/>
</dbReference>
<dbReference type="PANTHER" id="PTHR21349">
    <property type="entry name" value="50S RIBOSOMAL PROTEIN L21"/>
    <property type="match status" value="1"/>
</dbReference>
<dbReference type="PANTHER" id="PTHR21349:SF0">
    <property type="entry name" value="LARGE RIBOSOMAL SUBUNIT PROTEIN BL21M"/>
    <property type="match status" value="1"/>
</dbReference>
<dbReference type="Pfam" id="PF00829">
    <property type="entry name" value="Ribosomal_L21p"/>
    <property type="match status" value="1"/>
</dbReference>
<dbReference type="SUPFAM" id="SSF141091">
    <property type="entry name" value="L21p-like"/>
    <property type="match status" value="1"/>
</dbReference>
<proteinExistence type="inferred from homology"/>
<evidence type="ECO:0000255" key="1">
    <source>
        <dbReference type="HAMAP-Rule" id="MF_01363"/>
    </source>
</evidence>
<evidence type="ECO:0000305" key="2"/>
<reference key="1">
    <citation type="journal article" date="2009" name="BMC Genomics">
        <title>Complete genome sequence of the sugarcane nitrogen-fixing endophyte Gluconacetobacter diazotrophicus Pal5.</title>
        <authorList>
            <person name="Bertalan M."/>
            <person name="Albano R."/>
            <person name="de Padua V."/>
            <person name="Rouws L."/>
            <person name="Rojas C."/>
            <person name="Hemerly A."/>
            <person name="Teixeira K."/>
            <person name="Schwab S."/>
            <person name="Araujo J."/>
            <person name="Oliveira A."/>
            <person name="Franca L."/>
            <person name="Magalhaes V."/>
            <person name="Alqueres S."/>
            <person name="Cardoso A."/>
            <person name="Almeida W."/>
            <person name="Loureiro M.M."/>
            <person name="Nogueira E."/>
            <person name="Cidade D."/>
            <person name="Oliveira D."/>
            <person name="Simao T."/>
            <person name="Macedo J."/>
            <person name="Valadao A."/>
            <person name="Dreschsel M."/>
            <person name="Freitas F."/>
            <person name="Vidal M."/>
            <person name="Guedes H."/>
            <person name="Rodrigues E."/>
            <person name="Meneses C."/>
            <person name="Brioso P."/>
            <person name="Pozzer L."/>
            <person name="Figueiredo D."/>
            <person name="Montano H."/>
            <person name="Junior J."/>
            <person name="de Souza Filho G."/>
            <person name="Martin Quintana Flores V."/>
            <person name="Ferreira B."/>
            <person name="Branco A."/>
            <person name="Gonzalez P."/>
            <person name="Guillobel H."/>
            <person name="Lemos M."/>
            <person name="Seibel L."/>
            <person name="Macedo J."/>
            <person name="Alves-Ferreira M."/>
            <person name="Sachetto-Martins G."/>
            <person name="Coelho A."/>
            <person name="Santos E."/>
            <person name="Amaral G."/>
            <person name="Neves A."/>
            <person name="Pacheco A.B."/>
            <person name="Carvalho D."/>
            <person name="Lery L."/>
            <person name="Bisch P."/>
            <person name="Rossle S.C."/>
            <person name="Urmenyi T."/>
            <person name="Rael Pereira A."/>
            <person name="Silva R."/>
            <person name="Rondinelli E."/>
            <person name="von Kruger W."/>
            <person name="Martins O."/>
            <person name="Baldani J.I."/>
            <person name="Ferreira P.C."/>
        </authorList>
    </citation>
    <scope>NUCLEOTIDE SEQUENCE [LARGE SCALE GENOMIC DNA]</scope>
    <source>
        <strain>ATCC 49037 / DSM 5601 / CCUG 37298 / CIP 103539 / LMG 7603 / PAl5</strain>
    </source>
</reference>
<reference key="2">
    <citation type="journal article" date="2010" name="Stand. Genomic Sci.">
        <title>Two genome sequences of the same bacterial strain, Gluconacetobacter diazotrophicus PAl 5, suggest a new standard in genome sequence submission.</title>
        <authorList>
            <person name="Giongo A."/>
            <person name="Tyler H.L."/>
            <person name="Zipperer U.N."/>
            <person name="Triplett E.W."/>
        </authorList>
    </citation>
    <scope>NUCLEOTIDE SEQUENCE [LARGE SCALE GENOMIC DNA]</scope>
    <source>
        <strain>ATCC 49037 / DSM 5601 / CCUG 37298 / CIP 103539 / LMG 7603 / PAl5</strain>
    </source>
</reference>
<protein>
    <recommendedName>
        <fullName evidence="1">Large ribosomal subunit protein bL21</fullName>
    </recommendedName>
    <alternativeName>
        <fullName evidence="2">50S ribosomal protein L21</fullName>
    </alternativeName>
</protein>
<gene>
    <name evidence="1" type="primary">rplU</name>
    <name type="ordered locus">GDI3171</name>
    <name type="ordered locus">Gdia_3189</name>
</gene>
<name>RL21_GLUDA</name>
<comment type="function">
    <text evidence="1">This protein binds to 23S rRNA in the presence of protein L20.</text>
</comment>
<comment type="subunit">
    <text evidence="1">Part of the 50S ribosomal subunit. Contacts protein L20.</text>
</comment>
<comment type="similarity">
    <text evidence="1">Belongs to the bacterial ribosomal protein bL21 family.</text>
</comment>
<organism>
    <name type="scientific">Gluconacetobacter diazotrophicus (strain ATCC 49037 / DSM 5601 / CCUG 37298 / CIP 103539 / LMG 7603 / PAl5)</name>
    <dbReference type="NCBI Taxonomy" id="272568"/>
    <lineage>
        <taxon>Bacteria</taxon>
        <taxon>Pseudomonadati</taxon>
        <taxon>Pseudomonadota</taxon>
        <taxon>Alphaproteobacteria</taxon>
        <taxon>Acetobacterales</taxon>
        <taxon>Acetobacteraceae</taxon>
        <taxon>Gluconacetobacter</taxon>
    </lineage>
</organism>
<keyword id="KW-1185">Reference proteome</keyword>
<keyword id="KW-0687">Ribonucleoprotein</keyword>
<keyword id="KW-0689">Ribosomal protein</keyword>
<keyword id="KW-0694">RNA-binding</keyword>
<keyword id="KW-0699">rRNA-binding</keyword>